<dbReference type="EMBL" id="BX908798">
    <property type="protein sequence ID" value="CAF23945.1"/>
    <property type="molecule type" value="Genomic_DNA"/>
</dbReference>
<dbReference type="SMR" id="Q6MBV4"/>
<dbReference type="STRING" id="264201.pc1221"/>
<dbReference type="eggNOG" id="COG0249">
    <property type="taxonomic scope" value="Bacteria"/>
</dbReference>
<dbReference type="HOGENOM" id="CLU_002472_3_1_0"/>
<dbReference type="Proteomes" id="UP000000529">
    <property type="component" value="Chromosome"/>
</dbReference>
<dbReference type="GO" id="GO:0005829">
    <property type="term" value="C:cytosol"/>
    <property type="evidence" value="ECO:0007669"/>
    <property type="project" value="TreeGrafter"/>
</dbReference>
<dbReference type="GO" id="GO:0005524">
    <property type="term" value="F:ATP binding"/>
    <property type="evidence" value="ECO:0007669"/>
    <property type="project" value="UniProtKB-UniRule"/>
</dbReference>
<dbReference type="GO" id="GO:0140664">
    <property type="term" value="F:ATP-dependent DNA damage sensor activity"/>
    <property type="evidence" value="ECO:0007669"/>
    <property type="project" value="InterPro"/>
</dbReference>
<dbReference type="GO" id="GO:0003684">
    <property type="term" value="F:damaged DNA binding"/>
    <property type="evidence" value="ECO:0007669"/>
    <property type="project" value="UniProtKB-UniRule"/>
</dbReference>
<dbReference type="GO" id="GO:0030983">
    <property type="term" value="F:mismatched DNA binding"/>
    <property type="evidence" value="ECO:0007669"/>
    <property type="project" value="InterPro"/>
</dbReference>
<dbReference type="GO" id="GO:0006298">
    <property type="term" value="P:mismatch repair"/>
    <property type="evidence" value="ECO:0007669"/>
    <property type="project" value="UniProtKB-UniRule"/>
</dbReference>
<dbReference type="CDD" id="cd03284">
    <property type="entry name" value="ABC_MutS1"/>
    <property type="match status" value="1"/>
</dbReference>
<dbReference type="FunFam" id="3.40.50.300:FF:000870">
    <property type="entry name" value="MutS protein homolog 4"/>
    <property type="match status" value="1"/>
</dbReference>
<dbReference type="Gene3D" id="1.10.1420.10">
    <property type="match status" value="2"/>
</dbReference>
<dbReference type="Gene3D" id="3.40.1170.10">
    <property type="entry name" value="DNA repair protein MutS, domain I"/>
    <property type="match status" value="1"/>
</dbReference>
<dbReference type="Gene3D" id="3.30.420.110">
    <property type="entry name" value="MutS, connector domain"/>
    <property type="match status" value="1"/>
</dbReference>
<dbReference type="Gene3D" id="3.40.50.300">
    <property type="entry name" value="P-loop containing nucleotide triphosphate hydrolases"/>
    <property type="match status" value="1"/>
</dbReference>
<dbReference type="HAMAP" id="MF_00096">
    <property type="entry name" value="MutS"/>
    <property type="match status" value="1"/>
</dbReference>
<dbReference type="InterPro" id="IPR005748">
    <property type="entry name" value="DNA_mismatch_repair_MutS"/>
</dbReference>
<dbReference type="InterPro" id="IPR007695">
    <property type="entry name" value="DNA_mismatch_repair_MutS-lik_N"/>
</dbReference>
<dbReference type="InterPro" id="IPR017261">
    <property type="entry name" value="DNA_mismatch_repair_MutS/MSH"/>
</dbReference>
<dbReference type="InterPro" id="IPR000432">
    <property type="entry name" value="DNA_mismatch_repair_MutS_C"/>
</dbReference>
<dbReference type="InterPro" id="IPR007861">
    <property type="entry name" value="DNA_mismatch_repair_MutS_clamp"/>
</dbReference>
<dbReference type="InterPro" id="IPR007696">
    <property type="entry name" value="DNA_mismatch_repair_MutS_core"/>
</dbReference>
<dbReference type="InterPro" id="IPR016151">
    <property type="entry name" value="DNA_mismatch_repair_MutS_N"/>
</dbReference>
<dbReference type="InterPro" id="IPR036187">
    <property type="entry name" value="DNA_mismatch_repair_MutS_sf"/>
</dbReference>
<dbReference type="InterPro" id="IPR007860">
    <property type="entry name" value="DNA_mmatch_repair_MutS_con_dom"/>
</dbReference>
<dbReference type="InterPro" id="IPR045076">
    <property type="entry name" value="MutS"/>
</dbReference>
<dbReference type="InterPro" id="IPR036678">
    <property type="entry name" value="MutS_con_dom_sf"/>
</dbReference>
<dbReference type="InterPro" id="IPR027417">
    <property type="entry name" value="P-loop_NTPase"/>
</dbReference>
<dbReference type="NCBIfam" id="TIGR01070">
    <property type="entry name" value="mutS1"/>
    <property type="match status" value="1"/>
</dbReference>
<dbReference type="NCBIfam" id="NF003810">
    <property type="entry name" value="PRK05399.1"/>
    <property type="match status" value="1"/>
</dbReference>
<dbReference type="PANTHER" id="PTHR11361:SF34">
    <property type="entry name" value="DNA MISMATCH REPAIR PROTEIN MSH1, MITOCHONDRIAL"/>
    <property type="match status" value="1"/>
</dbReference>
<dbReference type="PANTHER" id="PTHR11361">
    <property type="entry name" value="DNA MISMATCH REPAIR PROTEIN MUTS FAMILY MEMBER"/>
    <property type="match status" value="1"/>
</dbReference>
<dbReference type="Pfam" id="PF01624">
    <property type="entry name" value="MutS_I"/>
    <property type="match status" value="1"/>
</dbReference>
<dbReference type="Pfam" id="PF05188">
    <property type="entry name" value="MutS_II"/>
    <property type="match status" value="1"/>
</dbReference>
<dbReference type="Pfam" id="PF05192">
    <property type="entry name" value="MutS_III"/>
    <property type="match status" value="1"/>
</dbReference>
<dbReference type="Pfam" id="PF05190">
    <property type="entry name" value="MutS_IV"/>
    <property type="match status" value="1"/>
</dbReference>
<dbReference type="Pfam" id="PF00488">
    <property type="entry name" value="MutS_V"/>
    <property type="match status" value="1"/>
</dbReference>
<dbReference type="PIRSF" id="PIRSF037677">
    <property type="entry name" value="DNA_mis_repair_Msh6"/>
    <property type="match status" value="1"/>
</dbReference>
<dbReference type="SMART" id="SM00534">
    <property type="entry name" value="MUTSac"/>
    <property type="match status" value="1"/>
</dbReference>
<dbReference type="SMART" id="SM00533">
    <property type="entry name" value="MUTSd"/>
    <property type="match status" value="1"/>
</dbReference>
<dbReference type="SUPFAM" id="SSF55271">
    <property type="entry name" value="DNA repair protein MutS, domain I"/>
    <property type="match status" value="1"/>
</dbReference>
<dbReference type="SUPFAM" id="SSF53150">
    <property type="entry name" value="DNA repair protein MutS, domain II"/>
    <property type="match status" value="1"/>
</dbReference>
<dbReference type="SUPFAM" id="SSF48334">
    <property type="entry name" value="DNA repair protein MutS, domain III"/>
    <property type="match status" value="1"/>
</dbReference>
<dbReference type="SUPFAM" id="SSF52540">
    <property type="entry name" value="P-loop containing nucleoside triphosphate hydrolases"/>
    <property type="match status" value="1"/>
</dbReference>
<dbReference type="PROSITE" id="PS00486">
    <property type="entry name" value="DNA_MISMATCH_REPAIR_2"/>
    <property type="match status" value="1"/>
</dbReference>
<name>MUTS_PARUW</name>
<keyword id="KW-0067">ATP-binding</keyword>
<keyword id="KW-0227">DNA damage</keyword>
<keyword id="KW-0234">DNA repair</keyword>
<keyword id="KW-0238">DNA-binding</keyword>
<keyword id="KW-0547">Nucleotide-binding</keyword>
<keyword id="KW-1185">Reference proteome</keyword>
<comment type="function">
    <text evidence="1">This protein is involved in the repair of mismatches in DNA. It is possible that it carries out the mismatch recognition step. This protein has a weak ATPase activity.</text>
</comment>
<comment type="similarity">
    <text evidence="1">Belongs to the DNA mismatch repair MutS family.</text>
</comment>
<accession>Q6MBV4</accession>
<protein>
    <recommendedName>
        <fullName evidence="1">DNA mismatch repair protein MutS</fullName>
    </recommendedName>
</protein>
<feature type="chain" id="PRO_0000224387" description="DNA mismatch repair protein MutS">
    <location>
        <begin position="1"/>
        <end position="858"/>
    </location>
</feature>
<feature type="binding site" evidence="1">
    <location>
        <begin position="637"/>
        <end position="644"/>
    </location>
    <ligand>
        <name>ATP</name>
        <dbReference type="ChEBI" id="CHEBI:30616"/>
    </ligand>
</feature>
<gene>
    <name evidence="1" type="primary">mutS</name>
    <name type="ordered locus">pc1221</name>
</gene>
<organism>
    <name type="scientific">Protochlamydia amoebophila (strain UWE25)</name>
    <dbReference type="NCBI Taxonomy" id="264201"/>
    <lineage>
        <taxon>Bacteria</taxon>
        <taxon>Pseudomonadati</taxon>
        <taxon>Chlamydiota</taxon>
        <taxon>Chlamydiia</taxon>
        <taxon>Parachlamydiales</taxon>
        <taxon>Parachlamydiaceae</taxon>
        <taxon>Candidatus Protochlamydia</taxon>
    </lineage>
</organism>
<sequence>MFIFQLKISLFMSDFEQHSLDESKISPMMMQWHACKKMAGDAILFFRMGDFYEAFYEDAHLLSKELELTLTKRQEIPMSGIPFHTSEGYIDKLVAKGFRVAIAEQIEDPKKTKGLVKREVVRVVSPGTVINSSLLSDKNNNFFAALVKVGQIFGLAFLDLTTGEYWVSEFTQERELLNELYRLHPAEFLTSEKFKEKHASLFEEMQQTYSFLVNTLEDWQFEHQQAHDFLINHFKVQRLDGFGLSGMVAAINAAGALLNYLQETLCLPIQHIQSIRCYSSSQFMMLDRMTQRNLELTHSLQDGSRRHTLLGVIDQTQTPMGARLMHHWVKQPLLKVSEIHQRQNGIQALLNHEHIVDQLQNLFLQIKDIERLMMKVSACYATPRDLIALHFSFKPIAFIKSLLLNIPSEWINEHAQKLDPLSKMNALISNAIVEEPPLRLGEGKTFRQGFHRELDELREISHDSKAWMARYQTQIREETGIKTLKVGFNKMFGYFIEVSRGQIDKMPDHFIRRQTLVNAERYITPELKEYESKVLTAEERINSIESELFHQLRLEVASYTKNVLEVAQALAKIDCLISLTNVAKKYCYTCPVIDDSSILVIEEGRHPVIETVCRHEKFIPNDTYLDDQANRLLLITGPNMAGKSTYLRQVALIVILAQIGSFVPAAKAHIGIIDKVFTRIGASDDLSRGQSTFMVEMTETANILNNATSQSLVILDEIGRGTSTYDGISIAWSVAEYLLTTEKRMAKTLFATHYWELTKLEEKVPGAVNYNVAVHEADDHITFLRKIIKGGTDKSYGIHVARLAGLPQAVLNRSKEILEHLEENANRKSAFEPTRSKKSMVSKVKVPSTDFQLNLFQS</sequence>
<reference key="1">
    <citation type="journal article" date="2004" name="Science">
        <title>Illuminating the evolutionary history of chlamydiae.</title>
        <authorList>
            <person name="Horn M."/>
            <person name="Collingro A."/>
            <person name="Schmitz-Esser S."/>
            <person name="Beier C.L."/>
            <person name="Purkhold U."/>
            <person name="Fartmann B."/>
            <person name="Brandt P."/>
            <person name="Nyakatura G.J."/>
            <person name="Droege M."/>
            <person name="Frishman D."/>
            <person name="Rattei T."/>
            <person name="Mewes H.-W."/>
            <person name="Wagner M."/>
        </authorList>
    </citation>
    <scope>NUCLEOTIDE SEQUENCE [LARGE SCALE GENOMIC DNA]</scope>
    <source>
        <strain>UWE25</strain>
    </source>
</reference>
<evidence type="ECO:0000255" key="1">
    <source>
        <dbReference type="HAMAP-Rule" id="MF_00096"/>
    </source>
</evidence>
<proteinExistence type="inferred from homology"/>